<organism>
    <name type="scientific">Pseudomonas putida (strain W619)</name>
    <dbReference type="NCBI Taxonomy" id="390235"/>
    <lineage>
        <taxon>Bacteria</taxon>
        <taxon>Pseudomonadati</taxon>
        <taxon>Pseudomonadota</taxon>
        <taxon>Gammaproteobacteria</taxon>
        <taxon>Pseudomonadales</taxon>
        <taxon>Pseudomonadaceae</taxon>
        <taxon>Pseudomonas</taxon>
    </lineage>
</organism>
<comment type="function">
    <text evidence="1">Catalyzes the reversible phosphatidyl group transfer from one phosphatidylglycerol molecule to another to form cardiolipin (CL) (diphosphatidylglycerol) and glycerol.</text>
</comment>
<comment type="catalytic activity">
    <reaction evidence="1">
        <text>2 a 1,2-diacyl-sn-glycero-3-phospho-(1'-sn-glycerol) = a cardiolipin + glycerol</text>
        <dbReference type="Rhea" id="RHEA:31451"/>
        <dbReference type="ChEBI" id="CHEBI:17754"/>
        <dbReference type="ChEBI" id="CHEBI:62237"/>
        <dbReference type="ChEBI" id="CHEBI:64716"/>
    </reaction>
</comment>
<comment type="subcellular location">
    <subcellularLocation>
        <location evidence="1">Cell inner membrane</location>
        <topology evidence="1">Multi-pass membrane protein</topology>
    </subcellularLocation>
</comment>
<comment type="similarity">
    <text evidence="1">Belongs to the phospholipase D family. Cardiolipin synthase subfamily. ClsA sub-subfamily.</text>
</comment>
<protein>
    <recommendedName>
        <fullName evidence="1">Cardiolipin synthase A</fullName>
        <shortName evidence="1">CL synthase</shortName>
        <ecNumber evidence="1">2.7.8.-</ecNumber>
    </recommendedName>
</protein>
<gene>
    <name evidence="1" type="primary">clsA</name>
    <name type="synonym">cls</name>
    <name type="ordered locus">PputW619_5143</name>
</gene>
<reference key="1">
    <citation type="submission" date="2008-02" db="EMBL/GenBank/DDBJ databases">
        <title>Complete sequence of Pseudomonas putida W619.</title>
        <authorList>
            <person name="Copeland A."/>
            <person name="Lucas S."/>
            <person name="Lapidus A."/>
            <person name="Barry K."/>
            <person name="Detter J.C."/>
            <person name="Glavina del Rio T."/>
            <person name="Dalin E."/>
            <person name="Tice H."/>
            <person name="Pitluck S."/>
            <person name="Chain P."/>
            <person name="Malfatti S."/>
            <person name="Shin M."/>
            <person name="Vergez L."/>
            <person name="Schmutz J."/>
            <person name="Larimer F."/>
            <person name="Land M."/>
            <person name="Hauser L."/>
            <person name="Kyrpides N."/>
            <person name="Kim E."/>
            <person name="Taghavi S."/>
            <person name="Vangronsveld D."/>
            <person name="van der Lelie D."/>
            <person name="Richardson P."/>
        </authorList>
    </citation>
    <scope>NUCLEOTIDE SEQUENCE [LARGE SCALE GENOMIC DNA]</scope>
    <source>
        <strain>W619</strain>
    </source>
</reference>
<feature type="chain" id="PRO_1000098910" description="Cardiolipin synthase A">
    <location>
        <begin position="1"/>
        <end position="479"/>
    </location>
</feature>
<feature type="transmembrane region" description="Helical" evidence="1">
    <location>
        <begin position="8"/>
        <end position="28"/>
    </location>
</feature>
<feature type="transmembrane region" description="Helical" evidence="1">
    <location>
        <begin position="38"/>
        <end position="58"/>
    </location>
</feature>
<feature type="domain" description="PLD phosphodiesterase 1" evidence="1">
    <location>
        <begin position="218"/>
        <end position="245"/>
    </location>
</feature>
<feature type="domain" description="PLD phosphodiesterase 2" evidence="1">
    <location>
        <begin position="392"/>
        <end position="419"/>
    </location>
</feature>
<feature type="active site" evidence="1">
    <location>
        <position position="223"/>
    </location>
</feature>
<feature type="active site" evidence="1">
    <location>
        <position position="225"/>
    </location>
</feature>
<feature type="active site" evidence="1">
    <location>
        <position position="230"/>
    </location>
</feature>
<feature type="active site" evidence="1">
    <location>
        <position position="397"/>
    </location>
</feature>
<feature type="active site" evidence="1">
    <location>
        <position position="399"/>
    </location>
</feature>
<feature type="active site" evidence="1">
    <location>
        <position position="404"/>
    </location>
</feature>
<sequence length="479" mass="53846">MDYHSPYFFGYVLGLVHLLGIIAALHAVFTVRTAQGAIAWAMSLFFIPYFTLIPYLVFGARSFNAYIKARRQANQEMHVAMANLNWRPWVEEALTARESQSYAALRAMPKLGRMPCLANNQVKLLIDGRATFDAIFAAIEQAREVVLVQFFIIHNDTIGKALQQLLLRKAADGVKVFVLYDRVGSHALPASYSQSLRDAGVQIHAFATRRGWFNRFQVNFRNHRKIVVVDGVTGFIGGHNVGDEYLGGNPHLSPWRDTHVQIGGPVLACLQESFAEDWYWATRQLPPLILPDAYPDNGVLCQALASGPADPQETCSLFFIEAIHSATRRVWITSPYFIPDEAVFAALRLAVLRGVDVRILIPARPDHRIVYAASSLFAFEAVRAGVRMFRYQPGFLHQKVVLVDDEVSAIGSANLDNRSFRLNFEITLLTVDRDFADQVETMLTTDFEQAREITPEDSSKTHRIQQLGMRIARLISPIL</sequence>
<dbReference type="EC" id="2.7.8.-" evidence="1"/>
<dbReference type="EMBL" id="CP000949">
    <property type="protein sequence ID" value="ACA75619.1"/>
    <property type="molecule type" value="Genomic_DNA"/>
</dbReference>
<dbReference type="SMR" id="B1JFN5"/>
<dbReference type="STRING" id="390235.PputW619_5143"/>
<dbReference type="KEGG" id="ppw:PputW619_5143"/>
<dbReference type="eggNOG" id="COG1502">
    <property type="taxonomic scope" value="Bacteria"/>
</dbReference>
<dbReference type="HOGENOM" id="CLU_038053_1_0_6"/>
<dbReference type="OrthoDB" id="9762009at2"/>
<dbReference type="GO" id="GO:0005886">
    <property type="term" value="C:plasma membrane"/>
    <property type="evidence" value="ECO:0007669"/>
    <property type="project" value="UniProtKB-SubCell"/>
</dbReference>
<dbReference type="GO" id="GO:0008808">
    <property type="term" value="F:cardiolipin synthase activity"/>
    <property type="evidence" value="ECO:0007669"/>
    <property type="project" value="InterPro"/>
</dbReference>
<dbReference type="GO" id="GO:0032049">
    <property type="term" value="P:cardiolipin biosynthetic process"/>
    <property type="evidence" value="ECO:0007669"/>
    <property type="project" value="InterPro"/>
</dbReference>
<dbReference type="CDD" id="cd09155">
    <property type="entry name" value="PLDc_PaCLS_like_1"/>
    <property type="match status" value="1"/>
</dbReference>
<dbReference type="FunFam" id="3.30.870.10:FF:000014">
    <property type="entry name" value="Cardiolipin synthase"/>
    <property type="match status" value="1"/>
</dbReference>
<dbReference type="FunFam" id="3.30.870.10:FF:000021">
    <property type="entry name" value="Cardiolipin synthase"/>
    <property type="match status" value="1"/>
</dbReference>
<dbReference type="Gene3D" id="3.30.870.10">
    <property type="entry name" value="Endonuclease Chain A"/>
    <property type="match status" value="2"/>
</dbReference>
<dbReference type="HAMAP" id="MF_00190">
    <property type="entry name" value="Cardiolipin_synth_ClsA"/>
    <property type="match status" value="1"/>
</dbReference>
<dbReference type="InterPro" id="IPR022924">
    <property type="entry name" value="Cardiolipin_synthase"/>
</dbReference>
<dbReference type="InterPro" id="IPR030840">
    <property type="entry name" value="CL_synthase_A"/>
</dbReference>
<dbReference type="InterPro" id="IPR025202">
    <property type="entry name" value="PLD-like_dom"/>
</dbReference>
<dbReference type="InterPro" id="IPR001736">
    <property type="entry name" value="PLipase_D/transphosphatidylase"/>
</dbReference>
<dbReference type="NCBIfam" id="TIGR04265">
    <property type="entry name" value="bac_cardiolipin"/>
    <property type="match status" value="1"/>
</dbReference>
<dbReference type="PANTHER" id="PTHR21248">
    <property type="entry name" value="CARDIOLIPIN SYNTHASE"/>
    <property type="match status" value="1"/>
</dbReference>
<dbReference type="PANTHER" id="PTHR21248:SF22">
    <property type="entry name" value="PHOSPHOLIPASE D"/>
    <property type="match status" value="1"/>
</dbReference>
<dbReference type="Pfam" id="PF13091">
    <property type="entry name" value="PLDc_2"/>
    <property type="match status" value="2"/>
</dbReference>
<dbReference type="SMART" id="SM00155">
    <property type="entry name" value="PLDc"/>
    <property type="match status" value="2"/>
</dbReference>
<dbReference type="SUPFAM" id="SSF56024">
    <property type="entry name" value="Phospholipase D/nuclease"/>
    <property type="match status" value="2"/>
</dbReference>
<dbReference type="PROSITE" id="PS50035">
    <property type="entry name" value="PLD"/>
    <property type="match status" value="2"/>
</dbReference>
<proteinExistence type="inferred from homology"/>
<name>CLSA_PSEPW</name>
<keyword id="KW-0997">Cell inner membrane</keyword>
<keyword id="KW-1003">Cell membrane</keyword>
<keyword id="KW-0444">Lipid biosynthesis</keyword>
<keyword id="KW-0443">Lipid metabolism</keyword>
<keyword id="KW-0472">Membrane</keyword>
<keyword id="KW-0594">Phospholipid biosynthesis</keyword>
<keyword id="KW-1208">Phospholipid metabolism</keyword>
<keyword id="KW-0677">Repeat</keyword>
<keyword id="KW-0808">Transferase</keyword>
<keyword id="KW-0812">Transmembrane</keyword>
<keyword id="KW-1133">Transmembrane helix</keyword>
<evidence type="ECO:0000255" key="1">
    <source>
        <dbReference type="HAMAP-Rule" id="MF_00190"/>
    </source>
</evidence>
<accession>B1JFN5</accession>